<accession>Q8C437</accession>
<accession>Q8CA31</accession>
<accession>Q9DAA1</accession>
<accession>Q9JMB9</accession>
<name>PEX5R_MOUSE</name>
<protein>
    <recommendedName>
        <fullName>PEX5-related protein</fullName>
    </recommendedName>
    <alternativeName>
        <fullName>PEX2-related protein</fullName>
    </alternativeName>
    <alternativeName>
        <fullName>PEX5-like protein</fullName>
    </alternativeName>
    <alternativeName>
        <fullName>Peroxin-5-related protein</fullName>
    </alternativeName>
    <alternativeName>
        <fullName>Tetratricopeptide repeat-containing Rab8b-interacting protein</fullName>
        <shortName>Pex5Rp</shortName>
        <shortName>TRIP8b</shortName>
    </alternativeName>
</protein>
<feature type="chain" id="PRO_0000106318" description="PEX5-related protein">
    <location>
        <begin position="1"/>
        <end position="567"/>
    </location>
</feature>
<feature type="repeat" description="TPR 1">
    <location>
        <begin position="267"/>
        <end position="300"/>
    </location>
</feature>
<feature type="repeat" description="TPR 2">
    <location>
        <begin position="301"/>
        <end position="334"/>
    </location>
</feature>
<feature type="repeat" description="TPR 3">
    <location>
        <begin position="336"/>
        <end position="368"/>
    </location>
</feature>
<feature type="repeat" description="TPR 4">
    <location>
        <begin position="415"/>
        <end position="448"/>
    </location>
</feature>
<feature type="repeat" description="TPR 5">
    <location>
        <begin position="450"/>
        <end position="482"/>
    </location>
</feature>
<feature type="repeat" description="TPR 6">
    <location>
        <begin position="484"/>
        <end position="516"/>
    </location>
</feature>
<feature type="region of interest" description="Disordered" evidence="4">
    <location>
        <begin position="56"/>
        <end position="105"/>
    </location>
</feature>
<feature type="region of interest" description="Disordered" evidence="4">
    <location>
        <begin position="150"/>
        <end position="169"/>
    </location>
</feature>
<feature type="modified residue" description="Phosphoserine" evidence="12">
    <location>
        <position position="146"/>
    </location>
</feature>
<feature type="modified residue" description="Phosphoserine" evidence="3">
    <location>
        <position position="194"/>
    </location>
</feature>
<feature type="modified residue" description="Phosphoserine" evidence="3">
    <location>
        <position position="198"/>
    </location>
</feature>
<feature type="modified residue" description="Phosphoserine" evidence="11 12">
    <location>
        <position position="202"/>
    </location>
</feature>
<feature type="modified residue" description="Phosphoserine" evidence="12">
    <location>
        <position position="386"/>
    </location>
</feature>
<feature type="modified residue" description="Phosphoserine" evidence="12">
    <location>
        <position position="388"/>
    </location>
</feature>
<feature type="splice variant" id="VSP_010437" description="In isoform 4." evidence="8">
    <location>
        <begin position="1"/>
        <end position="223"/>
    </location>
</feature>
<feature type="splice variant" id="VSP_010439" description="In isoform 3." evidence="9">
    <original>MYQGHM</original>
    <variation>MSDSEMDGRTHIPSLLNALLSRNRVMQMSYLKSKEQGYGKLSSDEDLEIIVDQK</variation>
    <location>
        <begin position="1"/>
        <end position="6"/>
    </location>
</feature>
<feature type="sequence conflict" description="In Ref. 2." evidence="10" ref="2">
    <original>P</original>
    <variation>T</variation>
    <location>
        <position position="62"/>
    </location>
</feature>
<feature type="sequence conflict" description="In Ref. 2; BAB24376." evidence="10" ref="2">
    <original>N</original>
    <variation>K</variation>
    <location>
        <position position="564"/>
    </location>
</feature>
<feature type="turn" evidence="13">
    <location>
        <begin position="263"/>
        <end position="266"/>
    </location>
</feature>
<feature type="helix" evidence="13">
    <location>
        <begin position="270"/>
        <end position="280"/>
    </location>
</feature>
<feature type="helix" evidence="13">
    <location>
        <begin position="283"/>
        <end position="296"/>
    </location>
</feature>
<feature type="helix" evidence="13">
    <location>
        <begin position="301"/>
        <end position="313"/>
    </location>
</feature>
<feature type="helix" evidence="13">
    <location>
        <begin position="317"/>
        <end position="330"/>
    </location>
</feature>
<feature type="helix" evidence="13">
    <location>
        <begin position="335"/>
        <end position="347"/>
    </location>
</feature>
<feature type="helix" evidence="13">
    <location>
        <begin position="351"/>
        <end position="364"/>
    </location>
</feature>
<feature type="helix" evidence="13">
    <location>
        <begin position="366"/>
        <end position="369"/>
    </location>
</feature>
<feature type="helix" evidence="13">
    <location>
        <begin position="393"/>
        <end position="408"/>
    </location>
</feature>
<feature type="helix" evidence="13">
    <location>
        <begin position="415"/>
        <end position="428"/>
    </location>
</feature>
<feature type="helix" evidence="13">
    <location>
        <begin position="431"/>
        <end position="444"/>
    </location>
</feature>
<feature type="helix" evidence="13">
    <location>
        <begin position="449"/>
        <end position="461"/>
    </location>
</feature>
<feature type="helix" evidence="13">
    <location>
        <begin position="465"/>
        <end position="478"/>
    </location>
</feature>
<feature type="helix" evidence="13">
    <location>
        <begin position="483"/>
        <end position="496"/>
    </location>
</feature>
<feature type="helix" evidence="13">
    <location>
        <begin position="500"/>
        <end position="514"/>
    </location>
</feature>
<feature type="helix" evidence="13">
    <location>
        <begin position="530"/>
        <end position="542"/>
    </location>
</feature>
<feature type="helix" evidence="13">
    <location>
        <begin position="545"/>
        <end position="552"/>
    </location>
</feature>
<feature type="helix" evidence="13">
    <location>
        <begin position="557"/>
        <end position="559"/>
    </location>
</feature>
<feature type="turn" evidence="13">
    <location>
        <begin position="560"/>
        <end position="564"/>
    </location>
</feature>
<organism>
    <name type="scientific">Mus musculus</name>
    <name type="common">Mouse</name>
    <dbReference type="NCBI Taxonomy" id="10090"/>
    <lineage>
        <taxon>Eukaryota</taxon>
        <taxon>Metazoa</taxon>
        <taxon>Chordata</taxon>
        <taxon>Craniata</taxon>
        <taxon>Vertebrata</taxon>
        <taxon>Euteleostomi</taxon>
        <taxon>Mammalia</taxon>
        <taxon>Eutheria</taxon>
        <taxon>Euarchontoglires</taxon>
        <taxon>Glires</taxon>
        <taxon>Rodentia</taxon>
        <taxon>Myomorpha</taxon>
        <taxon>Muroidea</taxon>
        <taxon>Muridae</taxon>
        <taxon>Murinae</taxon>
        <taxon>Mus</taxon>
        <taxon>Mus</taxon>
    </lineage>
</organism>
<proteinExistence type="evidence at protein level"/>
<comment type="function">
    <text evidence="5 6 7">Accessory subunit of hyperpolarization-activated cyclic nucleotide-gated (HCN) channels, regulating their cell-surface expression and cyclic nucleotide dependence.</text>
</comment>
<comment type="subunit">
    <text evidence="2 3 5 6 7">Interacts with RAB8B (By similarity). Forms an obligate 4:4 complex with HCN2 (PubMed:22550182). Interacts with HCN3 (Ref.5). Interacts with HCN4 with a 4:4 HCN4:PEX5L stoichiometry; reduces the effects of cAMP on the voltage-dependence and rate of activation of HCN4 (PubMed:36225302).</text>
</comment>
<comment type="subcellular location">
    <subcellularLocation>
        <location evidence="1">Cytoplasm</location>
    </subcellularLocation>
    <subcellularLocation>
        <location evidence="1">Membrane</location>
        <topology evidence="1">Peripheral membrane protein</topology>
    </subcellularLocation>
    <text evidence="1">Some fraction is membrane associated via its interaction with RAB8B.</text>
</comment>
<comment type="alternative products">
    <event type="alternative splicing"/>
    <isoform>
        <id>Q8C437-1</id>
        <name>1</name>
        <sequence type="displayed"/>
    </isoform>
    <isoform>
        <id>Q8C437-3</id>
        <name>3</name>
        <sequence type="described" ref="VSP_010439"/>
    </isoform>
    <isoform>
        <id>Q8C437-4</id>
        <name>4</name>
        <sequence type="described" ref="VSP_010437"/>
    </isoform>
</comment>
<comment type="similarity">
    <text evidence="10">Belongs to the peroxisomal targeting signal receptor family.</text>
</comment>
<comment type="sequence caution" evidence="10">
    <conflict type="erroneous initiation">
        <sequence resource="EMBL-CDS" id="BAC38781"/>
    </conflict>
</comment>
<dbReference type="EMBL" id="AB032591">
    <property type="protein sequence ID" value="BAA92877.1"/>
    <property type="molecule type" value="mRNA"/>
</dbReference>
<dbReference type="EMBL" id="AK006035">
    <property type="protein sequence ID" value="BAB24376.1"/>
    <property type="molecule type" value="mRNA"/>
</dbReference>
<dbReference type="EMBL" id="AK083141">
    <property type="protein sequence ID" value="BAC38781.1"/>
    <property type="status" value="ALT_INIT"/>
    <property type="molecule type" value="mRNA"/>
</dbReference>
<dbReference type="CCDS" id="CCDS17302.1">
    <molecule id="Q8C437-3"/>
</dbReference>
<dbReference type="CCDS" id="CCDS50888.1">
    <molecule id="Q8C437-4"/>
</dbReference>
<dbReference type="CCDS" id="CCDS50889.1">
    <molecule id="Q8C437-1"/>
</dbReference>
<dbReference type="RefSeq" id="NP_001156988.1">
    <property type="nucleotide sequence ID" value="NM_001163516.3"/>
</dbReference>
<dbReference type="RefSeq" id="NP_001156989.1">
    <molecule id="Q8C437-4"/>
    <property type="nucleotide sequence ID" value="NM_001163517.3"/>
</dbReference>
<dbReference type="PDB" id="4EQF">
    <property type="method" value="X-ray"/>
    <property type="resolution" value="3.00 A"/>
    <property type="chains" value="A=206-567"/>
</dbReference>
<dbReference type="PDBsum" id="4EQF"/>
<dbReference type="SMR" id="Q8C437"/>
<dbReference type="BioGRID" id="208454">
    <property type="interactions" value="46"/>
</dbReference>
<dbReference type="FunCoup" id="Q8C437">
    <property type="interactions" value="395"/>
</dbReference>
<dbReference type="IntAct" id="Q8C437">
    <property type="interactions" value="44"/>
</dbReference>
<dbReference type="STRING" id="10090.ENSMUSP00000142196"/>
<dbReference type="iPTMnet" id="Q8C437"/>
<dbReference type="PhosphoSitePlus" id="Q8C437"/>
<dbReference type="PaxDb" id="10090-ENSMUSP00000103861"/>
<dbReference type="ProteomicsDB" id="288039">
    <molecule id="Q8C437-1"/>
</dbReference>
<dbReference type="ProteomicsDB" id="288040">
    <molecule id="Q8C437-3"/>
</dbReference>
<dbReference type="ProteomicsDB" id="288041">
    <molecule id="Q8C437-4"/>
</dbReference>
<dbReference type="ABCD" id="Q8C437">
    <property type="antibodies" value="5 sequenced antibodies"/>
</dbReference>
<dbReference type="Antibodypedia" id="54548">
    <property type="antibodies" value="50 antibodies from 17 providers"/>
</dbReference>
<dbReference type="DNASU" id="58869"/>
<dbReference type="Ensembl" id="ENSMUST00000108221.2">
    <molecule id="Q8C437-4"/>
    <property type="protein sequence ID" value="ENSMUSP00000103856.2"/>
    <property type="gene ID" value="ENSMUSG00000027674.17"/>
</dbReference>
<dbReference type="GeneID" id="58869"/>
<dbReference type="KEGG" id="mmu:58869"/>
<dbReference type="UCSC" id="uc008owt.3">
    <molecule id="Q8C437-1"/>
    <property type="organism name" value="mouse"/>
</dbReference>
<dbReference type="AGR" id="MGI:1916672"/>
<dbReference type="CTD" id="51555"/>
<dbReference type="MGI" id="MGI:1916672">
    <property type="gene designation" value="Pex5l"/>
</dbReference>
<dbReference type="VEuPathDB" id="HostDB:ENSMUSG00000027674"/>
<dbReference type="eggNOG" id="KOG1125">
    <property type="taxonomic scope" value="Eukaryota"/>
</dbReference>
<dbReference type="GeneTree" id="ENSGT00940000155931"/>
<dbReference type="HOGENOM" id="CLU_013516_1_0_1"/>
<dbReference type="InParanoid" id="Q8C437"/>
<dbReference type="OrthoDB" id="10006023at2759"/>
<dbReference type="PhylomeDB" id="Q8C437"/>
<dbReference type="BioGRID-ORCS" id="58869">
    <property type="hits" value="2 hits in 78 CRISPR screens"/>
</dbReference>
<dbReference type="ChiTaRS" id="Pex5l">
    <property type="organism name" value="mouse"/>
</dbReference>
<dbReference type="EvolutionaryTrace" id="Q8C437"/>
<dbReference type="PRO" id="PR:Q8C437"/>
<dbReference type="Proteomes" id="UP000000589">
    <property type="component" value="Chromosome 3"/>
</dbReference>
<dbReference type="RNAct" id="Q8C437">
    <property type="molecule type" value="protein"/>
</dbReference>
<dbReference type="Bgee" id="ENSMUSG00000027674">
    <property type="expression patterns" value="Expressed in retinal neural layer and 110 other cell types or tissues"/>
</dbReference>
<dbReference type="ExpressionAtlas" id="Q8C437">
    <property type="expression patterns" value="baseline and differential"/>
</dbReference>
<dbReference type="GO" id="GO:0005737">
    <property type="term" value="C:cytoplasm"/>
    <property type="evidence" value="ECO:0000314"/>
    <property type="project" value="MGI"/>
</dbReference>
<dbReference type="GO" id="GO:0030425">
    <property type="term" value="C:dendrite"/>
    <property type="evidence" value="ECO:0000314"/>
    <property type="project" value="MGI"/>
</dbReference>
<dbReference type="GO" id="GO:0016020">
    <property type="term" value="C:membrane"/>
    <property type="evidence" value="ECO:0007669"/>
    <property type="project" value="UniProtKB-SubCell"/>
</dbReference>
<dbReference type="GO" id="GO:0043235">
    <property type="term" value="C:receptor complex"/>
    <property type="evidence" value="ECO:0000266"/>
    <property type="project" value="MGI"/>
</dbReference>
<dbReference type="GO" id="GO:0045185">
    <property type="term" value="P:maintenance of protein location"/>
    <property type="evidence" value="ECO:0000314"/>
    <property type="project" value="MGI"/>
</dbReference>
<dbReference type="GO" id="GO:0042391">
    <property type="term" value="P:regulation of membrane potential"/>
    <property type="evidence" value="ECO:0000314"/>
    <property type="project" value="MGI"/>
</dbReference>
<dbReference type="FunFam" id="1.25.40.10:FF:000012">
    <property type="entry name" value="PEX5-related protein isoform 5"/>
    <property type="match status" value="1"/>
</dbReference>
<dbReference type="Gene3D" id="1.25.40.10">
    <property type="entry name" value="Tetratricopeptide repeat domain"/>
    <property type="match status" value="1"/>
</dbReference>
<dbReference type="InterPro" id="IPR024111">
    <property type="entry name" value="PEX5/PEX5L"/>
</dbReference>
<dbReference type="InterPro" id="IPR011990">
    <property type="entry name" value="TPR-like_helical_dom_sf"/>
</dbReference>
<dbReference type="InterPro" id="IPR019734">
    <property type="entry name" value="TPR_rpt"/>
</dbReference>
<dbReference type="PANTHER" id="PTHR10130">
    <property type="entry name" value="PEROXISOMAL TARGETING SIGNAL 1 RECEPTOR PEX5"/>
    <property type="match status" value="1"/>
</dbReference>
<dbReference type="PANTHER" id="PTHR10130:SF1">
    <property type="entry name" value="PEX5-RELATED PROTEIN"/>
    <property type="match status" value="1"/>
</dbReference>
<dbReference type="Pfam" id="PF13432">
    <property type="entry name" value="TPR_16"/>
    <property type="match status" value="1"/>
</dbReference>
<dbReference type="Pfam" id="PF13181">
    <property type="entry name" value="TPR_8"/>
    <property type="match status" value="2"/>
</dbReference>
<dbReference type="SMART" id="SM00028">
    <property type="entry name" value="TPR"/>
    <property type="match status" value="5"/>
</dbReference>
<dbReference type="SUPFAM" id="SSF48452">
    <property type="entry name" value="TPR-like"/>
    <property type="match status" value="1"/>
</dbReference>
<dbReference type="PROSITE" id="PS50005">
    <property type="entry name" value="TPR"/>
    <property type="match status" value="5"/>
</dbReference>
<dbReference type="PROSITE" id="PS50293">
    <property type="entry name" value="TPR_REGION"/>
    <property type="match status" value="1"/>
</dbReference>
<keyword id="KW-0002">3D-structure</keyword>
<keyword id="KW-0025">Alternative splicing</keyword>
<keyword id="KW-0963">Cytoplasm</keyword>
<keyword id="KW-0472">Membrane</keyword>
<keyword id="KW-0597">Phosphoprotein</keyword>
<keyword id="KW-1185">Reference proteome</keyword>
<keyword id="KW-0677">Repeat</keyword>
<keyword id="KW-0802">TPR repeat</keyword>
<evidence type="ECO:0000250" key="1"/>
<evidence type="ECO:0000250" key="2">
    <source>
        <dbReference type="UniProtKB" id="Q8IYB4"/>
    </source>
</evidence>
<evidence type="ECO:0000250" key="3">
    <source>
        <dbReference type="UniProtKB" id="Q925N3"/>
    </source>
</evidence>
<evidence type="ECO:0000256" key="4">
    <source>
        <dbReference type="SAM" id="MobiDB-lite"/>
    </source>
</evidence>
<evidence type="ECO:0000269" key="5">
    <source>
    </source>
</evidence>
<evidence type="ECO:0000269" key="6">
    <source>
    </source>
</evidence>
<evidence type="ECO:0000269" key="7">
    <source ref="5"/>
</evidence>
<evidence type="ECO:0000303" key="8">
    <source>
    </source>
</evidence>
<evidence type="ECO:0000303" key="9">
    <source ref="1"/>
</evidence>
<evidence type="ECO:0000305" key="10"/>
<evidence type="ECO:0007744" key="11">
    <source>
    </source>
</evidence>
<evidence type="ECO:0007744" key="12">
    <source>
    </source>
</evidence>
<evidence type="ECO:0007829" key="13">
    <source>
        <dbReference type="PDB" id="4EQF"/>
    </source>
</evidence>
<sequence length="567" mass="63135">MYQGHMQLVNEQQESRPLLSPSIDDFLCETKSEAIAKPVTSNTAVLTTGLDLLDLSEPVSQPQTKAKKSEPSSKSSSLKKKADGSDLISADAEQRAQALRGPETSSLDLDIQTQLEKWDDVKFHGDRTSKGHLMAERKSCSSRTGSKELLWSAEHRSQPELSTGKSALNSESASELELVAPAQARLTKEHRWGSALLSRNHSLEEEFERAKAAVESDTEFWDKMQAEWEEMARRNWISENQEAQNQVTVSASEKGYYFHTENPFKDWPGAFEEGLKRLKEGDLPVTILFMEAAILQDPGDAEAWQFLGITQAENENEQAAIVALQRCLELQPNNLKALMALAVSYTNTSHQQDACEALKNWIKQNPKYKYLVKNKKGSPGLTRRMSKSPVDSSVLEGVKELYLEAAHQNGDMIDPDLQTGLGVLFHLSGEFNRAIDAFNAALTVRPEDYSLWNRLGATLANGDRSEEAVEAYTRALEIQPGFIRSRYNLGISCINLGAYREAVSNFLTALSLQRKSRNQQQVPHPAISGNIWAALRIALSLMDQPELFQAANLGDLDVLLRAFNLDP</sequence>
<gene>
    <name type="primary">Pex5l</name>
    <name type="synonym">Pex2</name>
    <name type="synonym">Pex5r</name>
    <name type="synonym">Pxr2</name>
</gene>
<reference key="1">
    <citation type="submission" date="1999-09" db="EMBL/GenBank/DDBJ databases">
        <title>A novel peroxisomal targeting signal 1 receptor-like gene, PXR2, preferentially expressed in brain.</title>
        <authorList>
            <person name="Sano H."/>
            <person name="Snider J."/>
            <person name="Ohta M."/>
        </authorList>
    </citation>
    <scope>NUCLEOTIDE SEQUENCE [MRNA] (ISOFORM 3)</scope>
    <source>
        <tissue>Brain</tissue>
    </source>
</reference>
<reference key="2">
    <citation type="journal article" date="2005" name="Science">
        <title>The transcriptional landscape of the mammalian genome.</title>
        <authorList>
            <person name="Carninci P."/>
            <person name="Kasukawa T."/>
            <person name="Katayama S."/>
            <person name="Gough J."/>
            <person name="Frith M.C."/>
            <person name="Maeda N."/>
            <person name="Oyama R."/>
            <person name="Ravasi T."/>
            <person name="Lenhard B."/>
            <person name="Wells C."/>
            <person name="Kodzius R."/>
            <person name="Shimokawa K."/>
            <person name="Bajic V.B."/>
            <person name="Brenner S.E."/>
            <person name="Batalov S."/>
            <person name="Forrest A.R."/>
            <person name="Zavolan M."/>
            <person name="Davis M.J."/>
            <person name="Wilming L.G."/>
            <person name="Aidinis V."/>
            <person name="Allen J.E."/>
            <person name="Ambesi-Impiombato A."/>
            <person name="Apweiler R."/>
            <person name="Aturaliya R.N."/>
            <person name="Bailey T.L."/>
            <person name="Bansal M."/>
            <person name="Baxter L."/>
            <person name="Beisel K.W."/>
            <person name="Bersano T."/>
            <person name="Bono H."/>
            <person name="Chalk A.M."/>
            <person name="Chiu K.P."/>
            <person name="Choudhary V."/>
            <person name="Christoffels A."/>
            <person name="Clutterbuck D.R."/>
            <person name="Crowe M.L."/>
            <person name="Dalla E."/>
            <person name="Dalrymple B.P."/>
            <person name="de Bono B."/>
            <person name="Della Gatta G."/>
            <person name="di Bernardo D."/>
            <person name="Down T."/>
            <person name="Engstrom P."/>
            <person name="Fagiolini M."/>
            <person name="Faulkner G."/>
            <person name="Fletcher C.F."/>
            <person name="Fukushima T."/>
            <person name="Furuno M."/>
            <person name="Futaki S."/>
            <person name="Gariboldi M."/>
            <person name="Georgii-Hemming P."/>
            <person name="Gingeras T.R."/>
            <person name="Gojobori T."/>
            <person name="Green R.E."/>
            <person name="Gustincich S."/>
            <person name="Harbers M."/>
            <person name="Hayashi Y."/>
            <person name="Hensch T.K."/>
            <person name="Hirokawa N."/>
            <person name="Hill D."/>
            <person name="Huminiecki L."/>
            <person name="Iacono M."/>
            <person name="Ikeo K."/>
            <person name="Iwama A."/>
            <person name="Ishikawa T."/>
            <person name="Jakt M."/>
            <person name="Kanapin A."/>
            <person name="Katoh M."/>
            <person name="Kawasawa Y."/>
            <person name="Kelso J."/>
            <person name="Kitamura H."/>
            <person name="Kitano H."/>
            <person name="Kollias G."/>
            <person name="Krishnan S.P."/>
            <person name="Kruger A."/>
            <person name="Kummerfeld S.K."/>
            <person name="Kurochkin I.V."/>
            <person name="Lareau L.F."/>
            <person name="Lazarevic D."/>
            <person name="Lipovich L."/>
            <person name="Liu J."/>
            <person name="Liuni S."/>
            <person name="McWilliam S."/>
            <person name="Madan Babu M."/>
            <person name="Madera M."/>
            <person name="Marchionni L."/>
            <person name="Matsuda H."/>
            <person name="Matsuzawa S."/>
            <person name="Miki H."/>
            <person name="Mignone F."/>
            <person name="Miyake S."/>
            <person name="Morris K."/>
            <person name="Mottagui-Tabar S."/>
            <person name="Mulder N."/>
            <person name="Nakano N."/>
            <person name="Nakauchi H."/>
            <person name="Ng P."/>
            <person name="Nilsson R."/>
            <person name="Nishiguchi S."/>
            <person name="Nishikawa S."/>
            <person name="Nori F."/>
            <person name="Ohara O."/>
            <person name="Okazaki Y."/>
            <person name="Orlando V."/>
            <person name="Pang K.C."/>
            <person name="Pavan W.J."/>
            <person name="Pavesi G."/>
            <person name="Pesole G."/>
            <person name="Petrovsky N."/>
            <person name="Piazza S."/>
            <person name="Reed J."/>
            <person name="Reid J.F."/>
            <person name="Ring B.Z."/>
            <person name="Ringwald M."/>
            <person name="Rost B."/>
            <person name="Ruan Y."/>
            <person name="Salzberg S.L."/>
            <person name="Sandelin A."/>
            <person name="Schneider C."/>
            <person name="Schoenbach C."/>
            <person name="Sekiguchi K."/>
            <person name="Semple C.A."/>
            <person name="Seno S."/>
            <person name="Sessa L."/>
            <person name="Sheng Y."/>
            <person name="Shibata Y."/>
            <person name="Shimada H."/>
            <person name="Shimada K."/>
            <person name="Silva D."/>
            <person name="Sinclair B."/>
            <person name="Sperling S."/>
            <person name="Stupka E."/>
            <person name="Sugiura K."/>
            <person name="Sultana R."/>
            <person name="Takenaka Y."/>
            <person name="Taki K."/>
            <person name="Tammoja K."/>
            <person name="Tan S.L."/>
            <person name="Tang S."/>
            <person name="Taylor M.S."/>
            <person name="Tegner J."/>
            <person name="Teichmann S.A."/>
            <person name="Ueda H.R."/>
            <person name="van Nimwegen E."/>
            <person name="Verardo R."/>
            <person name="Wei C.L."/>
            <person name="Yagi K."/>
            <person name="Yamanishi H."/>
            <person name="Zabarovsky E."/>
            <person name="Zhu S."/>
            <person name="Zimmer A."/>
            <person name="Hide W."/>
            <person name="Bult C."/>
            <person name="Grimmond S.M."/>
            <person name="Teasdale R.D."/>
            <person name="Liu E.T."/>
            <person name="Brusic V."/>
            <person name="Quackenbush J."/>
            <person name="Wahlestedt C."/>
            <person name="Mattick J.S."/>
            <person name="Hume D.A."/>
            <person name="Kai C."/>
            <person name="Sasaki D."/>
            <person name="Tomaru Y."/>
            <person name="Fukuda S."/>
            <person name="Kanamori-Katayama M."/>
            <person name="Suzuki M."/>
            <person name="Aoki J."/>
            <person name="Arakawa T."/>
            <person name="Iida J."/>
            <person name="Imamura K."/>
            <person name="Itoh M."/>
            <person name="Kato T."/>
            <person name="Kawaji H."/>
            <person name="Kawagashira N."/>
            <person name="Kawashima T."/>
            <person name="Kojima M."/>
            <person name="Kondo S."/>
            <person name="Konno H."/>
            <person name="Nakano K."/>
            <person name="Ninomiya N."/>
            <person name="Nishio T."/>
            <person name="Okada M."/>
            <person name="Plessy C."/>
            <person name="Shibata K."/>
            <person name="Shiraki T."/>
            <person name="Suzuki S."/>
            <person name="Tagami M."/>
            <person name="Waki K."/>
            <person name="Watahiki A."/>
            <person name="Okamura-Oho Y."/>
            <person name="Suzuki H."/>
            <person name="Kawai J."/>
            <person name="Hayashizaki Y."/>
        </authorList>
    </citation>
    <scope>NUCLEOTIDE SEQUENCE [LARGE SCALE MRNA] (ISOFORMS 1 AND 4)</scope>
    <source>
        <strain>C57BL/6J</strain>
        <tissue>Hippocampus</tissue>
        <tissue>Testis</tissue>
    </source>
</reference>
<reference key="3">
    <citation type="journal article" date="2006" name="Mol. Cell. Proteomics">
        <title>Comprehensive identification of phosphorylation sites in postsynaptic density preparations.</title>
        <authorList>
            <person name="Trinidad J.C."/>
            <person name="Specht C.G."/>
            <person name="Thalhammer A."/>
            <person name="Schoepfer R."/>
            <person name="Burlingame A.L."/>
        </authorList>
    </citation>
    <scope>PHOSPHORYLATION [LARGE SCALE ANALYSIS] AT SER-202</scope>
    <scope>IDENTIFICATION BY MASS SPECTROMETRY [LARGE SCALE ANALYSIS]</scope>
    <source>
        <tissue>Brain</tissue>
    </source>
</reference>
<reference key="4">
    <citation type="journal article" date="2010" name="Cell">
        <title>A tissue-specific atlas of mouse protein phosphorylation and expression.</title>
        <authorList>
            <person name="Huttlin E.L."/>
            <person name="Jedrychowski M.P."/>
            <person name="Elias J.E."/>
            <person name="Goswami T."/>
            <person name="Rad R."/>
            <person name="Beausoleil S.A."/>
            <person name="Villen J."/>
            <person name="Haas W."/>
            <person name="Sowa M.E."/>
            <person name="Gygi S.P."/>
        </authorList>
    </citation>
    <scope>PHOSPHORYLATION [LARGE SCALE ANALYSIS] AT SER-146; SER-202; SER-386 AND SER-388</scope>
    <scope>IDENTIFICATION BY MASS SPECTROMETRY [LARGE SCALE ANALYSIS]</scope>
    <source>
        <tissue>Brain</tissue>
        <tissue>Testis</tissue>
    </source>
</reference>
<reference key="5">
    <citation type="journal article" date="2013" name="J. Biol. Chem.">
        <title>Up-regulation of hyperpolarization-activated cyclic nucleotide-gated channel 3 (HCN3) by specific interaction with K+ channel tetramerization domain-containing protein 3 (KCTD3).</title>
        <authorList>
            <person name="Cao-Ehlker X."/>
            <person name="Zong X."/>
            <person name="Hammelmann V."/>
            <person name="Gruner C."/>
            <person name="Fenske S."/>
            <person name="Michalakis S."/>
            <person name="Wahl-Schott C."/>
            <person name="Biel M."/>
        </authorList>
    </citation>
    <scope>FUNCTION</scope>
    <scope>INTERACTION WITH HCN3</scope>
</reference>
<reference key="6">
    <citation type="journal article" date="2012" name="Proc. Natl. Acad. Sci. U.S.A.">
        <title>Structure and stoichiometry of an accessory subunit TRIP8b interaction with hyperpolarization-activated cyclic nucleotide-gated channels.</title>
        <authorList>
            <person name="Bankston J.R."/>
            <person name="Camp S.S."/>
            <person name="DiMaio F."/>
            <person name="Lewis A.S."/>
            <person name="Chetkovich D.M."/>
            <person name="Zagotta W.N."/>
        </authorList>
    </citation>
    <scope>X-RAY CRYSTALLOGRAPHY (3.0 ANGSTROMS) OF 206-567 IN COMPLEX WITH HCN2</scope>
    <scope>FUNCTION</scope>
    <scope>SUBUNIT</scope>
</reference>
<reference key="7">
    <citation type="journal article" date="2022" name="Front. Physiol.">
        <title>Validation of the binding stoichiometry between HCN channels and their neuronal regulator TRIP8b by single molecule measurements.</title>
        <authorList>
            <person name="Saponaro A."/>
            <person name="Vallese F."/>
            <person name="Porro A."/>
            <person name="Clarke O.B."/>
        </authorList>
    </citation>
    <scope>INTERACTION WITH HCN4</scope>
    <scope>FUNCTION</scope>
</reference>